<organism>
    <name type="scientific">Xenopus laevis</name>
    <name type="common">African clawed frog</name>
    <dbReference type="NCBI Taxonomy" id="8355"/>
    <lineage>
        <taxon>Eukaryota</taxon>
        <taxon>Metazoa</taxon>
        <taxon>Chordata</taxon>
        <taxon>Craniata</taxon>
        <taxon>Vertebrata</taxon>
        <taxon>Euteleostomi</taxon>
        <taxon>Amphibia</taxon>
        <taxon>Batrachia</taxon>
        <taxon>Anura</taxon>
        <taxon>Pipoidea</taxon>
        <taxon>Pipidae</taxon>
        <taxon>Xenopodinae</taxon>
        <taxon>Xenopus</taxon>
        <taxon>Xenopus</taxon>
    </lineage>
</organism>
<keyword id="KW-0009">Actin-binding</keyword>
<keyword id="KW-0131">Cell cycle</keyword>
<keyword id="KW-0132">Cell division</keyword>
<keyword id="KW-0966">Cell projection</keyword>
<keyword id="KW-0175">Coiled coil</keyword>
<keyword id="KW-0963">Cytoplasm</keyword>
<keyword id="KW-0206">Cytoskeleton</keyword>
<keyword id="KW-0498">Mitosis</keyword>
<keyword id="KW-0539">Nucleus</keyword>
<keyword id="KW-1185">Reference proteome</keyword>
<protein>
    <recommendedName>
        <fullName>Anillin</fullName>
    </recommendedName>
</protein>
<gene>
    <name type="primary">anln</name>
</gene>
<feature type="chain" id="PRO_0000227967" description="Anillin">
    <location>
        <begin position="1"/>
        <end position="1116"/>
    </location>
</feature>
<feature type="domain" description="PH" evidence="3">
    <location>
        <begin position="975"/>
        <end position="1099"/>
    </location>
</feature>
<feature type="region of interest" description="Disordered" evidence="4">
    <location>
        <begin position="1"/>
        <end position="188"/>
    </location>
</feature>
<feature type="region of interest" description="Interactions with myh9 and myh10">
    <location>
        <begin position="142"/>
        <end position="254"/>
    </location>
</feature>
<feature type="region of interest" description="Disordered" evidence="4">
    <location>
        <begin position="205"/>
        <end position="257"/>
    </location>
</feature>
<feature type="region of interest" description="Interaction with F-actin">
    <location>
        <begin position="255"/>
        <end position="418"/>
    </location>
</feature>
<feature type="region of interest" description="Disordered" evidence="4">
    <location>
        <begin position="304"/>
        <end position="363"/>
    </location>
</feature>
<feature type="region of interest" description="Disordered" evidence="4">
    <location>
        <begin position="443"/>
        <end position="522"/>
    </location>
</feature>
<feature type="coiled-coil region" evidence="2">
    <location>
        <begin position="416"/>
        <end position="443"/>
    </location>
</feature>
<feature type="compositionally biased region" description="Basic and acidic residues" evidence="4">
    <location>
        <begin position="1"/>
        <end position="25"/>
    </location>
</feature>
<feature type="compositionally biased region" description="Basic and acidic residues" evidence="4">
    <location>
        <begin position="85"/>
        <end position="94"/>
    </location>
</feature>
<feature type="compositionally biased region" description="Polar residues" evidence="4">
    <location>
        <begin position="101"/>
        <end position="119"/>
    </location>
</feature>
<feature type="compositionally biased region" description="Basic and acidic residues" evidence="4">
    <location>
        <begin position="120"/>
        <end position="133"/>
    </location>
</feature>
<feature type="compositionally biased region" description="Low complexity" evidence="4">
    <location>
        <begin position="226"/>
        <end position="242"/>
    </location>
</feature>
<feature type="compositionally biased region" description="Polar residues" evidence="4">
    <location>
        <begin position="304"/>
        <end position="326"/>
    </location>
</feature>
<feature type="compositionally biased region" description="Polar residues" evidence="4">
    <location>
        <begin position="336"/>
        <end position="356"/>
    </location>
</feature>
<feature type="compositionally biased region" description="Polar residues" evidence="4">
    <location>
        <begin position="453"/>
        <end position="472"/>
    </location>
</feature>
<sequence length="1116" mass="122831">MDPFTEKLLERTRARRENLQKKMADRPTAGTRTAALNKRPREPLLEANHQPPAPAEEAKPSSKPSPSKRRCSDNASTPDAGAENKQPKTPELPKTELSAVASHQQLRATNQTPQVSLLSSDKELTASDVKDASSVKTRMQKLADQRRYWDNNVSPSSSPPAHVPPKDIIVSPPKPQIPDVGNDTPVGRRGRFANLAATIGSWEDDLSHPFVKPNNKQEKPGTACLSKESTTSSASASMNSHSVKQDTTSCSQRPKDTTVNKAVCSGQLKNILPASKPASSVASTEVSGKSKPLAIKSPAVVTSKPNENVLPASSSLKPVSANSSPQKTERPASRIYSYQSASARNELNNNTPVQTQQKDKVATSGGVGIKSFLERFGEKCQEHSPAPLNQGHRTAVLTPNTKSIQERLLKQNDISSTASLAQQQKKEREKELAALRGRYDRRNVWTKQEDEQQGTFPETSSNLPTSDVASCSETKRAEASGITSEKSVSGHFHPNMAEQVSSPEKIPTPVQSQLPLESPRLVNEGNTGNVACEVEMSVDGSIEEINSSGIITNIFSDVLEQHDEEGEEVDECLVEQVETDTDDEEREDEEEDALNISSMSLLAPLAETVGIESPKALLSPSNKVAAGNGESCDRKRSGRFQKSHVLRAESNDGIGSSEENQNLLYSIDAYRSQRFKETDRPPIMQTIVRKEDVSSRLQDKKTASPLSVNIKQKMKTLSNEVNLQQTVIHQASQALNCCIDEDHGKGSETEAEAERLLIVATEKRAALIAELNKIKNEGPQSQKKNVSNESAPSRGCISVSEMFLPLKADFVCNATQRMDSANYYFFLMIRAGAENIVASPLTSITSTMKGDALAFPTTFSLEDVSNDFEICVEVYSLVQKKEGHAPDKKKKTMKSKAITPKRLLTSITKSNMHTPALASPGGPNAVRTSNFVLVGSHKLTLSSIGSNKFPLDKVPFLSPLEGHIYLKIKCHVNSSVEDKGFLTMFEDVSGFGAWHRRWCVLSGYCISYWTYPDDEKRKKPIGRINLANCTSRKIEPANREFCARPNTFELITVRPQREGDRETLVSQCRDTLCVTKNWLSADTKEERNLWMQKLNQFLVDLRMWQPNACYRPASKP</sequence>
<dbReference type="EMBL" id="AY180201">
    <property type="protein sequence ID" value="AAO31737.1"/>
    <property type="molecule type" value="mRNA"/>
</dbReference>
<dbReference type="SMR" id="Q801E2"/>
<dbReference type="AGR" id="Xenbase:XB-GENE-865864"/>
<dbReference type="Xenbase" id="XB-GENE-865864">
    <property type="gene designation" value="anln.L"/>
</dbReference>
<dbReference type="Proteomes" id="UP000186698">
    <property type="component" value="Unplaced"/>
</dbReference>
<dbReference type="GO" id="GO:0005826">
    <property type="term" value="C:actomyosin contractile ring"/>
    <property type="evidence" value="ECO:0000318"/>
    <property type="project" value="GO_Central"/>
</dbReference>
<dbReference type="GO" id="GO:0032059">
    <property type="term" value="C:bleb"/>
    <property type="evidence" value="ECO:0000250"/>
    <property type="project" value="UniProtKB"/>
</dbReference>
<dbReference type="GO" id="GO:0005938">
    <property type="term" value="C:cell cortex"/>
    <property type="evidence" value="ECO:0000250"/>
    <property type="project" value="UniProtKB"/>
</dbReference>
<dbReference type="GO" id="GO:0005634">
    <property type="term" value="C:nucleus"/>
    <property type="evidence" value="ECO:0007669"/>
    <property type="project" value="UniProtKB-SubCell"/>
</dbReference>
<dbReference type="GO" id="GO:0003779">
    <property type="term" value="F:actin binding"/>
    <property type="evidence" value="ECO:0007669"/>
    <property type="project" value="UniProtKB-KW"/>
</dbReference>
<dbReference type="GO" id="GO:0000915">
    <property type="term" value="P:actomyosin contractile ring assembly"/>
    <property type="evidence" value="ECO:0000318"/>
    <property type="project" value="GO_Central"/>
</dbReference>
<dbReference type="GO" id="GO:0000281">
    <property type="term" value="P:mitotic cytokinesis"/>
    <property type="evidence" value="ECO:0000318"/>
    <property type="project" value="GO_Central"/>
</dbReference>
<dbReference type="GO" id="GO:1904172">
    <property type="term" value="P:positive regulation of bleb assembly"/>
    <property type="evidence" value="ECO:0000250"/>
    <property type="project" value="UniProtKB"/>
</dbReference>
<dbReference type="GO" id="GO:0031106">
    <property type="term" value="P:septin ring organization"/>
    <property type="evidence" value="ECO:0000318"/>
    <property type="project" value="GO_Central"/>
</dbReference>
<dbReference type="CDD" id="cd01263">
    <property type="entry name" value="PH_anillin"/>
    <property type="match status" value="1"/>
</dbReference>
<dbReference type="FunFam" id="2.30.29.30:FF:000111">
    <property type="entry name" value="anillin isoform X1"/>
    <property type="match status" value="1"/>
</dbReference>
<dbReference type="Gene3D" id="2.30.29.30">
    <property type="entry name" value="Pleckstrin-homology domain (PH domain)/Phosphotyrosine-binding domain (PTB)"/>
    <property type="match status" value="1"/>
</dbReference>
<dbReference type="InterPro" id="IPR012966">
    <property type="entry name" value="AHD"/>
</dbReference>
<dbReference type="InterPro" id="IPR031970">
    <property type="entry name" value="Anillin_N"/>
</dbReference>
<dbReference type="InterPro" id="IPR051364">
    <property type="entry name" value="Cytokinesis/Rho-signaling"/>
</dbReference>
<dbReference type="InterPro" id="IPR011993">
    <property type="entry name" value="PH-like_dom_sf"/>
</dbReference>
<dbReference type="InterPro" id="IPR037840">
    <property type="entry name" value="PH_Anillin"/>
</dbReference>
<dbReference type="InterPro" id="IPR001849">
    <property type="entry name" value="PH_domain"/>
</dbReference>
<dbReference type="PANTHER" id="PTHR21538:SF27">
    <property type="entry name" value="ANILLIN"/>
    <property type="match status" value="1"/>
</dbReference>
<dbReference type="PANTHER" id="PTHR21538">
    <property type="entry name" value="ANILLIN/RHOTEKIN RTKN"/>
    <property type="match status" value="1"/>
</dbReference>
<dbReference type="Pfam" id="PF08174">
    <property type="entry name" value="Anillin"/>
    <property type="match status" value="1"/>
</dbReference>
<dbReference type="Pfam" id="PF16018">
    <property type="entry name" value="Anillin_N"/>
    <property type="match status" value="1"/>
</dbReference>
<dbReference type="Pfam" id="PF00169">
    <property type="entry name" value="PH"/>
    <property type="match status" value="1"/>
</dbReference>
<dbReference type="SMART" id="SM00233">
    <property type="entry name" value="PH"/>
    <property type="match status" value="1"/>
</dbReference>
<dbReference type="SUPFAM" id="SSF50729">
    <property type="entry name" value="PH domain-like"/>
    <property type="match status" value="1"/>
</dbReference>
<dbReference type="PROSITE" id="PS50003">
    <property type="entry name" value="PH_DOMAIN"/>
    <property type="match status" value="1"/>
</dbReference>
<proteinExistence type="evidence at protein level"/>
<reference key="1">
    <citation type="journal article" date="2005" name="Mol. Biol. Cell">
        <title>Anillin binds nonmuscle myosin II and regulates the contractile ring.</title>
        <authorList>
            <person name="Straight A.F."/>
            <person name="Field C.M."/>
            <person name="Mitchison T.J."/>
        </authorList>
    </citation>
    <scope>NUCLEOTIDE SEQUENCE [MRNA]</scope>
    <scope>INTERACTION WITH ACTIN; MYH9 AND MYH10</scope>
    <scope>SUBCELLULAR LOCATION</scope>
</reference>
<reference key="2">
    <citation type="journal article" date="2002" name="Dev. Cell">
        <title>Self- and actin-templated assembly of mammalian septins.</title>
        <authorList>
            <person name="Kinoshita M."/>
            <person name="Field C.M."/>
            <person name="Coughlin M.L."/>
            <person name="Straight A.F."/>
            <person name="Mitchison T.J."/>
        </authorList>
    </citation>
    <scope>FUNCTION</scope>
    <scope>INTERACTION WITH ACTIN</scope>
    <scope>SUBCELLULAR LOCATION</scope>
</reference>
<comment type="function">
    <text evidence="1 5">Required for cytokinesis. Essential for the structural integrity of the cleavage furrow and for completion of cleavage furrow ingression (PubMed:12479805). Plays a role in bleb assembly during metaphase and anaphase of mitosis. May play a significant role in podocyte cell migration (By similarity).</text>
</comment>
<comment type="subunit">
    <text evidence="5 6">Interacts with and bundles F-actin (PubMed:12479805, PubMed:15496454). Interacts with the non-muscle myosin II heavy chains myh9 and myh10, and these interactions may be enhanced by the phosphorylation of myosin II regulatory light chain by mylk (PubMed:15496454).</text>
</comment>
<comment type="subcellular location">
    <subcellularLocation>
        <location>Nucleus</location>
    </subcellularLocation>
    <subcellularLocation>
        <location>Cytoplasm</location>
        <location>Cytoskeleton</location>
    </subcellularLocation>
    <subcellularLocation>
        <location evidence="1">Cytoplasm</location>
        <location evidence="1">Cell cortex</location>
    </subcellularLocation>
    <subcellularLocation>
        <location evidence="1">Cell projection</location>
        <location evidence="1">Bleb</location>
    </subcellularLocation>
    <text>Mainly found in the nucleus during interphase. Colocalizes with cortical F-actin upon nuclear envelope breakdown in mitosis and subsequently concentrates in the area of the prospective contractile ring in anaphase.</text>
</comment>
<name>ANLN_XENLA</name>
<evidence type="ECO:0000250" key="1">
    <source>
        <dbReference type="UniProtKB" id="Q9NQW6"/>
    </source>
</evidence>
<evidence type="ECO:0000255" key="2"/>
<evidence type="ECO:0000255" key="3">
    <source>
        <dbReference type="PROSITE-ProRule" id="PRU00145"/>
    </source>
</evidence>
<evidence type="ECO:0000256" key="4">
    <source>
        <dbReference type="SAM" id="MobiDB-lite"/>
    </source>
</evidence>
<evidence type="ECO:0000269" key="5">
    <source>
    </source>
</evidence>
<evidence type="ECO:0000269" key="6">
    <source>
    </source>
</evidence>
<accession>Q801E2</accession>